<feature type="chain" id="PRO_0000216016" description="Chalcone synthase">
    <location>
        <begin position="1"/>
        <end position="390"/>
    </location>
</feature>
<feature type="active site" evidence="1">
    <location>
        <position position="164"/>
    </location>
</feature>
<organism>
    <name type="scientific">Onobrychis viciifolia</name>
    <name type="common">Common sainfoin</name>
    <dbReference type="NCBI Taxonomy" id="3882"/>
    <lineage>
        <taxon>Eukaryota</taxon>
        <taxon>Viridiplantae</taxon>
        <taxon>Streptophyta</taxon>
        <taxon>Embryophyta</taxon>
        <taxon>Tracheophyta</taxon>
        <taxon>Spermatophyta</taxon>
        <taxon>Magnoliopsida</taxon>
        <taxon>eudicotyledons</taxon>
        <taxon>Gunneridae</taxon>
        <taxon>Pentapetalae</taxon>
        <taxon>rosids</taxon>
        <taxon>fabids</taxon>
        <taxon>Fabales</taxon>
        <taxon>Fabaceae</taxon>
        <taxon>Papilionoideae</taxon>
        <taxon>50 kb inversion clade</taxon>
        <taxon>NPAAA clade</taxon>
        <taxon>Hologalegina</taxon>
        <taxon>IRL clade</taxon>
        <taxon>Hedysareae</taxon>
        <taxon>Onobrychis</taxon>
    </lineage>
</organism>
<dbReference type="EC" id="2.3.1.74"/>
<dbReference type="EMBL" id="AF026258">
    <property type="protein sequence ID" value="AAB81987.1"/>
    <property type="molecule type" value="mRNA"/>
</dbReference>
<dbReference type="SMR" id="O22586"/>
<dbReference type="UniPathway" id="UPA00154"/>
<dbReference type="GO" id="GO:0016210">
    <property type="term" value="F:naringenin-chalcone synthase activity"/>
    <property type="evidence" value="ECO:0007669"/>
    <property type="project" value="UniProtKB-EC"/>
</dbReference>
<dbReference type="GO" id="GO:0009813">
    <property type="term" value="P:flavonoid biosynthetic process"/>
    <property type="evidence" value="ECO:0007669"/>
    <property type="project" value="UniProtKB-UniPathway"/>
</dbReference>
<dbReference type="GO" id="GO:0030639">
    <property type="term" value="P:polyketide biosynthetic process"/>
    <property type="evidence" value="ECO:0007669"/>
    <property type="project" value="TreeGrafter"/>
</dbReference>
<dbReference type="CDD" id="cd00831">
    <property type="entry name" value="CHS_like"/>
    <property type="match status" value="1"/>
</dbReference>
<dbReference type="FunFam" id="3.40.47.10:FF:000014">
    <property type="entry name" value="Chalcone synthase 1"/>
    <property type="match status" value="1"/>
</dbReference>
<dbReference type="FunFam" id="3.40.47.10:FF:000025">
    <property type="entry name" value="Chalcone synthase 2"/>
    <property type="match status" value="1"/>
</dbReference>
<dbReference type="Gene3D" id="3.40.47.10">
    <property type="match status" value="2"/>
</dbReference>
<dbReference type="InterPro" id="IPR012328">
    <property type="entry name" value="Chalcone/stilbene_synt_C"/>
</dbReference>
<dbReference type="InterPro" id="IPR001099">
    <property type="entry name" value="Chalcone/stilbene_synt_N"/>
</dbReference>
<dbReference type="InterPro" id="IPR018088">
    <property type="entry name" value="Chalcone/stilbene_synthase_AS"/>
</dbReference>
<dbReference type="InterPro" id="IPR011141">
    <property type="entry name" value="Polyketide_synthase_type-III"/>
</dbReference>
<dbReference type="InterPro" id="IPR016039">
    <property type="entry name" value="Thiolase-like"/>
</dbReference>
<dbReference type="PANTHER" id="PTHR11877:SF62">
    <property type="entry name" value="CHALCONE SYNTHASE 7"/>
    <property type="match status" value="1"/>
</dbReference>
<dbReference type="PANTHER" id="PTHR11877">
    <property type="entry name" value="HYDROXYMETHYLGLUTARYL-COA SYNTHASE"/>
    <property type="match status" value="1"/>
</dbReference>
<dbReference type="Pfam" id="PF02797">
    <property type="entry name" value="Chal_sti_synt_C"/>
    <property type="match status" value="1"/>
</dbReference>
<dbReference type="Pfam" id="PF00195">
    <property type="entry name" value="Chal_sti_synt_N"/>
    <property type="match status" value="1"/>
</dbReference>
<dbReference type="PIRSF" id="PIRSF000451">
    <property type="entry name" value="PKS_III"/>
    <property type="match status" value="1"/>
</dbReference>
<dbReference type="SUPFAM" id="SSF53901">
    <property type="entry name" value="Thiolase-like"/>
    <property type="match status" value="2"/>
</dbReference>
<dbReference type="PROSITE" id="PS00441">
    <property type="entry name" value="CHALCONE_SYNTH"/>
    <property type="match status" value="1"/>
</dbReference>
<evidence type="ECO:0000255" key="1">
    <source>
        <dbReference type="PROSITE-ProRule" id="PRU10023"/>
    </source>
</evidence>
<evidence type="ECO:0000305" key="2"/>
<accession>O22586</accession>
<proteinExistence type="evidence at transcript level"/>
<comment type="function">
    <text>The primary product of this enzyme is 4,2',4',6'-tetrahydroxychalcone (also termed naringenin-chalcone or chalcone) which can under specific conditions spontaneously isomerize into naringenin.</text>
</comment>
<comment type="catalytic activity">
    <reaction evidence="1">
        <text>(E)-4-coumaroyl-CoA + 3 malonyl-CoA + 3 H(+) = 2',4,4',6'-tetrahydroxychalcone + 3 CO2 + 4 CoA</text>
        <dbReference type="Rhea" id="RHEA:11128"/>
        <dbReference type="ChEBI" id="CHEBI:15378"/>
        <dbReference type="ChEBI" id="CHEBI:15413"/>
        <dbReference type="ChEBI" id="CHEBI:16526"/>
        <dbReference type="ChEBI" id="CHEBI:57287"/>
        <dbReference type="ChEBI" id="CHEBI:57384"/>
        <dbReference type="ChEBI" id="CHEBI:85008"/>
        <dbReference type="EC" id="2.3.1.74"/>
    </reaction>
</comment>
<comment type="pathway">
    <text>Secondary metabolite biosynthesis; flavonoid biosynthesis.</text>
</comment>
<comment type="similarity">
    <text evidence="2">Belongs to the thiolase-like superfamily. Chalcone/stilbene synthases family.</text>
</comment>
<keyword id="KW-0012">Acyltransferase</keyword>
<keyword id="KW-0284">Flavonoid biosynthesis</keyword>
<keyword id="KW-0808">Transferase</keyword>
<gene>
    <name type="primary">CHS</name>
</gene>
<sequence>MVDVAESRRTQRAEGPRTIFAIATANPPNCVEQSTYPDFYFKITNSEHKVELKEKFQRMDDKSMIKRRYMYLTEEILKENPNVCEYMAPSLDARQDMFVVEVPRLGKEAAVKAIKEWGQPKSKITHLIVCTTSGVDMPGADYQLTKLLGLRPHVKRYMMYQQGCFAGGTVLRLAKDLAENNKGARVLVVCSEVTAVTFRGPSDTHLDSLVGQALFGDGAAALIVGSDPIPEIEKPLFELIWTAQTIAPDSEGAIDGHLREVGLTFHLLKDVPGIVSKNIDKALVEAFQPLGISDYNSIFWIAHPGGPAILDQVEQKLAFKPEKMRATREVLSEYGNMSSACVLFILDEMRKKSAQNGLKTTGEGLEWGVLFGFGPGLTIETVVLLRSVAI</sequence>
<reference key="1">
    <citation type="submission" date="1997-09" db="EMBL/GenBank/DDBJ databases">
        <title>Proanthcyanidin synthesis in the forage legume Onobrychis viciifolia. A study of chalcone synthase, dihydroflavonol 4-reductase and leucoanthocyanidin 4-reductase in developing leaves.</title>
        <authorList>
            <person name="Joseph R.G."/>
            <person name="Tanner G."/>
            <person name="Larkin P."/>
        </authorList>
    </citation>
    <scope>NUCLEOTIDE SEQUENCE [MRNA]</scope>
    <source>
        <tissue>Leaf</tissue>
    </source>
</reference>
<protein>
    <recommendedName>
        <fullName>Chalcone synthase</fullName>
        <ecNumber>2.3.1.74</ecNumber>
    </recommendedName>
    <alternativeName>
        <fullName>Naringenin-chalcone synthase</fullName>
    </alternativeName>
</protein>
<name>CHSY_ONOVI</name>